<evidence type="ECO:0000250" key="1"/>
<evidence type="ECO:0000255" key="2"/>
<evidence type="ECO:0000256" key="3">
    <source>
        <dbReference type="SAM" id="MobiDB-lite"/>
    </source>
</evidence>
<evidence type="ECO:0000305" key="4"/>
<reference key="1">
    <citation type="submission" date="2010-03" db="EMBL/GenBank/DDBJ databases">
        <title>The genome sequence of Coccidioides posadasii strain Silveira.</title>
        <authorList>
            <consortium name="The Broad Institute Genome Sequencing Center for Infectious Disease"/>
            <person name="Neafsey D."/>
            <person name="Orbach M."/>
            <person name="Henn M.R."/>
            <person name="Cole G.T."/>
            <person name="Galgiani J."/>
            <person name="Gardner M.J."/>
            <person name="Kirkland T.N."/>
            <person name="Taylor J.W."/>
            <person name="Young S.K."/>
            <person name="Zeng Q."/>
            <person name="Koehrsen M."/>
            <person name="Alvarado L."/>
            <person name="Berlin A."/>
            <person name="Borenstein D."/>
            <person name="Chapman S.B."/>
            <person name="Chen Z."/>
            <person name="Engels R."/>
            <person name="Freedman E."/>
            <person name="Gellesch M."/>
            <person name="Goldberg J."/>
            <person name="Griggs A."/>
            <person name="Gujja S."/>
            <person name="Heilman E."/>
            <person name="Heiman D."/>
            <person name="Howarth C."/>
            <person name="Jen D."/>
            <person name="Larson L."/>
            <person name="Mehta T."/>
            <person name="Neiman D."/>
            <person name="Park D."/>
            <person name="Pearson M."/>
            <person name="Richards J."/>
            <person name="Roberts A."/>
            <person name="Saif S."/>
            <person name="Shea T."/>
            <person name="Shenoy N."/>
            <person name="Sisk P."/>
            <person name="Stolte C."/>
            <person name="Sykes S."/>
            <person name="Walk T."/>
            <person name="White J."/>
            <person name="Yandava C."/>
            <person name="Haas B."/>
            <person name="Nusbaum C."/>
            <person name="Birren B."/>
        </authorList>
    </citation>
    <scope>NUCLEOTIDE SEQUENCE [LARGE SCALE GENOMIC DNA]</scope>
    <source>
        <strain>RMSCC 757 / Silveira</strain>
    </source>
</reference>
<proteinExistence type="inferred from homology"/>
<name>DAPB_COCPS</name>
<gene>
    <name type="primary">DAPB</name>
    <name type="ORF">CPSG_00188</name>
</gene>
<comment type="function">
    <text evidence="1">Type IV dipeptidyl-peptidase which removes N-terminal dipeptides sequentially from polypeptides having unsubstituted N-termini provided that the penultimate residue is proline.</text>
</comment>
<comment type="catalytic activity">
    <reaction>
        <text>Release of an N-terminal dipeptide, Xaa-Yaa-|-Zaa-, from a polypeptide, preferentially when Yaa is Pro, provided Zaa is neither Pro nor hydroxyproline.</text>
        <dbReference type="EC" id="3.4.14.5"/>
    </reaction>
</comment>
<comment type="subcellular location">
    <subcellularLocation>
        <location evidence="1">Vacuole membrane</location>
        <topology evidence="1">Single-pass type II membrane protein</topology>
    </subcellularLocation>
    <text evidence="1">Lysosome-like vacuoles.</text>
</comment>
<comment type="similarity">
    <text evidence="4">Belongs to the peptidase S9B family.</text>
</comment>
<organism>
    <name type="scientific">Coccidioides posadasii (strain RMSCC 757 / Silveira)</name>
    <name type="common">Valley fever fungus</name>
    <dbReference type="NCBI Taxonomy" id="443226"/>
    <lineage>
        <taxon>Eukaryota</taxon>
        <taxon>Fungi</taxon>
        <taxon>Dikarya</taxon>
        <taxon>Ascomycota</taxon>
        <taxon>Pezizomycotina</taxon>
        <taxon>Eurotiomycetes</taxon>
        <taxon>Eurotiomycetidae</taxon>
        <taxon>Onygenales</taxon>
        <taxon>Onygenaceae</taxon>
        <taxon>Coccidioides</taxon>
    </lineage>
</organism>
<protein>
    <recommendedName>
        <fullName>Probable dipeptidyl-aminopeptidase B</fullName>
        <shortName>DPAP B</shortName>
        <ecNumber>3.4.14.5</ecNumber>
    </recommendedName>
</protein>
<accession>E9CUF4</accession>
<feature type="chain" id="PRO_0000412143" description="Probable dipeptidyl-aminopeptidase B">
    <location>
        <begin position="1"/>
        <end position="917"/>
    </location>
</feature>
<feature type="topological domain" description="Cytoplasmic" evidence="2">
    <location>
        <begin position="1"/>
        <end position="90"/>
    </location>
</feature>
<feature type="transmembrane region" description="Helical; Signal-anchor for type II membrane protein" evidence="2">
    <location>
        <begin position="91"/>
        <end position="111"/>
    </location>
</feature>
<feature type="topological domain" description="Vacuolar" evidence="2">
    <location>
        <begin position="112"/>
        <end position="917"/>
    </location>
</feature>
<feature type="region of interest" description="Disordered" evidence="3">
    <location>
        <begin position="1"/>
        <end position="78"/>
    </location>
</feature>
<feature type="compositionally biased region" description="Basic and acidic residues" evidence="3">
    <location>
        <begin position="16"/>
        <end position="26"/>
    </location>
</feature>
<feature type="compositionally biased region" description="Low complexity" evidence="3">
    <location>
        <begin position="27"/>
        <end position="49"/>
    </location>
</feature>
<feature type="compositionally biased region" description="Basic and acidic residues" evidence="3">
    <location>
        <begin position="55"/>
        <end position="65"/>
    </location>
</feature>
<feature type="active site" description="Charge relay system" evidence="1">
    <location>
        <position position="754"/>
    </location>
</feature>
<feature type="active site" description="Charge relay system" evidence="1">
    <location>
        <position position="831"/>
    </location>
</feature>
<feature type="active site" description="Charge relay system" evidence="1">
    <location>
        <position position="864"/>
    </location>
</feature>
<feature type="glycosylation site" description="N-linked (GlcNAc...) asparagine" evidence="2">
    <location>
        <position position="350"/>
    </location>
</feature>
<feature type="glycosylation site" description="N-linked (GlcNAc...) asparagine" evidence="2">
    <location>
        <position position="465"/>
    </location>
</feature>
<feature type="glycosylation site" description="N-linked (GlcNAc...) asparagine" evidence="2">
    <location>
        <position position="813"/>
    </location>
</feature>
<dbReference type="EC" id="3.4.14.5"/>
<dbReference type="EMBL" id="GL636486">
    <property type="protein sequence ID" value="EFW22289.1"/>
    <property type="molecule type" value="Genomic_DNA"/>
</dbReference>
<dbReference type="SMR" id="E9CUF4"/>
<dbReference type="STRING" id="443226.E9CUF4"/>
<dbReference type="ESTHER" id="cocp7-dapb">
    <property type="family name" value="DPP4N_Peptidase_S9"/>
</dbReference>
<dbReference type="GlyCosmos" id="E9CUF4">
    <property type="glycosylation" value="3 sites, No reported glycans"/>
</dbReference>
<dbReference type="VEuPathDB" id="FungiDB:CPSG_00188"/>
<dbReference type="VEuPathDB" id="FungiDB:D8B26_001003"/>
<dbReference type="eggNOG" id="KOG2100">
    <property type="taxonomic scope" value="Eukaryota"/>
</dbReference>
<dbReference type="HOGENOM" id="CLU_006105_0_1_1"/>
<dbReference type="OMA" id="MRTPQEN"/>
<dbReference type="OrthoDB" id="28823at33183"/>
<dbReference type="Proteomes" id="UP000002497">
    <property type="component" value="Unassembled WGS sequence"/>
</dbReference>
<dbReference type="GO" id="GO:0000329">
    <property type="term" value="C:fungal-type vacuole membrane"/>
    <property type="evidence" value="ECO:0007669"/>
    <property type="project" value="EnsemblFungi"/>
</dbReference>
<dbReference type="GO" id="GO:0005886">
    <property type="term" value="C:plasma membrane"/>
    <property type="evidence" value="ECO:0007669"/>
    <property type="project" value="TreeGrafter"/>
</dbReference>
<dbReference type="GO" id="GO:0004177">
    <property type="term" value="F:aminopeptidase activity"/>
    <property type="evidence" value="ECO:0007669"/>
    <property type="project" value="UniProtKB-KW"/>
</dbReference>
<dbReference type="GO" id="GO:0008239">
    <property type="term" value="F:dipeptidyl-peptidase activity"/>
    <property type="evidence" value="ECO:0007669"/>
    <property type="project" value="UniProtKB-EC"/>
</dbReference>
<dbReference type="GO" id="GO:0008236">
    <property type="term" value="F:serine-type peptidase activity"/>
    <property type="evidence" value="ECO:0007669"/>
    <property type="project" value="UniProtKB-KW"/>
</dbReference>
<dbReference type="GO" id="GO:0006508">
    <property type="term" value="P:proteolysis"/>
    <property type="evidence" value="ECO:0007669"/>
    <property type="project" value="UniProtKB-KW"/>
</dbReference>
<dbReference type="FunFam" id="3.40.50.1820:FF:000003">
    <property type="entry name" value="Dipeptidyl peptidase 4"/>
    <property type="match status" value="1"/>
</dbReference>
<dbReference type="Gene3D" id="3.40.50.1820">
    <property type="entry name" value="alpha/beta hydrolase"/>
    <property type="match status" value="1"/>
</dbReference>
<dbReference type="Gene3D" id="2.140.10.30">
    <property type="entry name" value="Dipeptidylpeptidase IV, N-terminal domain"/>
    <property type="match status" value="1"/>
</dbReference>
<dbReference type="InterPro" id="IPR029058">
    <property type="entry name" value="AB_hydrolase_fold"/>
</dbReference>
<dbReference type="InterPro" id="IPR001375">
    <property type="entry name" value="Peptidase_S9_cat"/>
</dbReference>
<dbReference type="InterPro" id="IPR002469">
    <property type="entry name" value="Peptidase_S9B_N"/>
</dbReference>
<dbReference type="InterPro" id="IPR050278">
    <property type="entry name" value="Serine_Prot_S9B/DPPIV"/>
</dbReference>
<dbReference type="PANTHER" id="PTHR11731:SF200">
    <property type="entry name" value="DIPEPTIDYL PEPTIDASE 10, ISOFORM B"/>
    <property type="match status" value="1"/>
</dbReference>
<dbReference type="PANTHER" id="PTHR11731">
    <property type="entry name" value="PROTEASE FAMILY S9B,C DIPEPTIDYL-PEPTIDASE IV-RELATED"/>
    <property type="match status" value="1"/>
</dbReference>
<dbReference type="Pfam" id="PF00930">
    <property type="entry name" value="DPPIV_N"/>
    <property type="match status" value="1"/>
</dbReference>
<dbReference type="Pfam" id="PF00326">
    <property type="entry name" value="Peptidase_S9"/>
    <property type="match status" value="1"/>
</dbReference>
<dbReference type="SUPFAM" id="SSF53474">
    <property type="entry name" value="alpha/beta-Hydrolases"/>
    <property type="match status" value="1"/>
</dbReference>
<dbReference type="SUPFAM" id="SSF82171">
    <property type="entry name" value="DPP6 N-terminal domain-like"/>
    <property type="match status" value="1"/>
</dbReference>
<sequence length="917" mass="102500">MGVEKRINDEEMQPLAERDDKSRDSIDSTSTASISLALLGGANGSAHGSRAARTRKSENQEKYHDDEEEGDLEEGFVPPAGGWSAPRKVSVIFTLIVTLCIAGWLVAFFVLLGRHKDSSKDAAVSQGESNIIPGIYSGGRGGKKLDLDGVLFGNWSPKSHDISWFPGPNGADGLLLEQGGDRNKAYLRVEDIRSRNPGNKADDTIVLMRESSFMVGKRLVRPSKVWPSPDLKTVLVMSDQRKNWRHSYTGNYWIFDVETQTGEPLDPESLDGGIQLASWSPNSDAIVFTRKNNMFIRRLPSKNVKQITTDGGTNLFYGIPDWVYEEEVFSDSSATWWDGDGKFVAFLRTNESRVPEYPVQYFIPNTNKPSRPSEENYPDIRKIKYPKAGAPNPVVNIQFFDVEKEEVFSVDVKDDLPDDDRLVIGVTWASNGNVLVRETNRESDRLSVVLIDAAKRAGKVVRSRNFSSLDGGWVEPSQTTHFVPADPKNGRPHDGYIETIPHDGFEHLAYFTPMDNSEPTVLTSGDWEVVDAPSAVDLKRGLVYFVAAKENPTERHIYTVKLDGSDLQPIVDTKSAGYYSISLSAGAGYALLKYEGPDIPWQKVISTPANEEKYEESIEKNPGLADMARKYALPSLHYQTITISGYELQVVERRPANFNPDKKYPVLFHLYGGPGSQTVTKKFKVDFQSYVASNLGYIVVTVDGRGTGFIGRKARCAVRGNLGHYEAIDQIETAKAWGKRSYVDAGRMAIWGWSYGGFMTLKTLEQDAGQTFQYGMAVAPVTDWRFYDSIYTERYMHTPQNNPEGYDRSAISNVTALDQAVRFMIVHGSGDDNVHIQNTLTLLDKLDLGSVKNFDVHVYPDSDHSIYFHNANKMVYQRLSDWLVNAFNGEWVKTRDPIPHKSLARRALGLINILRNG</sequence>
<keyword id="KW-0031">Aminopeptidase</keyword>
<keyword id="KW-0325">Glycoprotein</keyword>
<keyword id="KW-0378">Hydrolase</keyword>
<keyword id="KW-0472">Membrane</keyword>
<keyword id="KW-0645">Protease</keyword>
<keyword id="KW-1185">Reference proteome</keyword>
<keyword id="KW-0720">Serine protease</keyword>
<keyword id="KW-0735">Signal-anchor</keyword>
<keyword id="KW-0812">Transmembrane</keyword>
<keyword id="KW-1133">Transmembrane helix</keyword>
<keyword id="KW-0926">Vacuole</keyword>